<comment type="function">
    <text evidence="1">Catalyzes the synthesis of GMP from XMP.</text>
</comment>
<comment type="catalytic activity">
    <reaction evidence="1">
        <text>XMP + L-glutamine + ATP + H2O = GMP + L-glutamate + AMP + diphosphate + 2 H(+)</text>
        <dbReference type="Rhea" id="RHEA:11680"/>
        <dbReference type="ChEBI" id="CHEBI:15377"/>
        <dbReference type="ChEBI" id="CHEBI:15378"/>
        <dbReference type="ChEBI" id="CHEBI:29985"/>
        <dbReference type="ChEBI" id="CHEBI:30616"/>
        <dbReference type="ChEBI" id="CHEBI:33019"/>
        <dbReference type="ChEBI" id="CHEBI:57464"/>
        <dbReference type="ChEBI" id="CHEBI:58115"/>
        <dbReference type="ChEBI" id="CHEBI:58359"/>
        <dbReference type="ChEBI" id="CHEBI:456215"/>
        <dbReference type="EC" id="6.3.5.2"/>
    </reaction>
</comment>
<comment type="pathway">
    <text evidence="1">Purine metabolism; GMP biosynthesis; GMP from XMP (L-Gln route): step 1/1.</text>
</comment>
<comment type="subunit">
    <text evidence="1">Homodimer.</text>
</comment>
<accession>A6QE71</accession>
<protein>
    <recommendedName>
        <fullName evidence="1">GMP synthase [glutamine-hydrolyzing]</fullName>
        <ecNumber evidence="1">6.3.5.2</ecNumber>
    </recommendedName>
    <alternativeName>
        <fullName evidence="1">GMP synthetase</fullName>
    </alternativeName>
    <alternativeName>
        <fullName evidence="1">Glutamine amidotransferase</fullName>
    </alternativeName>
</protein>
<gene>
    <name evidence="1" type="primary">guaA</name>
    <name type="ordered locus">NWMN_0381</name>
</gene>
<name>GUAA_STAAE</name>
<dbReference type="EC" id="6.3.5.2" evidence="1"/>
<dbReference type="EMBL" id="AP009351">
    <property type="protein sequence ID" value="BAF66653.1"/>
    <property type="molecule type" value="Genomic_DNA"/>
</dbReference>
<dbReference type="RefSeq" id="WP_000424966.1">
    <property type="nucleotide sequence ID" value="NZ_JBBIAE010000011.1"/>
</dbReference>
<dbReference type="SMR" id="A6QE71"/>
<dbReference type="MEROPS" id="C26.957"/>
<dbReference type="KEGG" id="sae:NWMN_0381"/>
<dbReference type="HOGENOM" id="CLU_014340_0_5_9"/>
<dbReference type="UniPathway" id="UPA00189">
    <property type="reaction ID" value="UER00296"/>
</dbReference>
<dbReference type="Proteomes" id="UP000006386">
    <property type="component" value="Chromosome"/>
</dbReference>
<dbReference type="GO" id="GO:0005829">
    <property type="term" value="C:cytosol"/>
    <property type="evidence" value="ECO:0007669"/>
    <property type="project" value="TreeGrafter"/>
</dbReference>
<dbReference type="GO" id="GO:0005524">
    <property type="term" value="F:ATP binding"/>
    <property type="evidence" value="ECO:0007669"/>
    <property type="project" value="UniProtKB-UniRule"/>
</dbReference>
<dbReference type="GO" id="GO:0003921">
    <property type="term" value="F:GMP synthase activity"/>
    <property type="evidence" value="ECO:0007669"/>
    <property type="project" value="InterPro"/>
</dbReference>
<dbReference type="CDD" id="cd01742">
    <property type="entry name" value="GATase1_GMP_Synthase"/>
    <property type="match status" value="1"/>
</dbReference>
<dbReference type="CDD" id="cd01997">
    <property type="entry name" value="GMP_synthase_C"/>
    <property type="match status" value="1"/>
</dbReference>
<dbReference type="FunFam" id="3.30.300.10:FF:000002">
    <property type="entry name" value="GMP synthase [glutamine-hydrolyzing]"/>
    <property type="match status" value="1"/>
</dbReference>
<dbReference type="FunFam" id="3.40.50.620:FF:000001">
    <property type="entry name" value="GMP synthase [glutamine-hydrolyzing]"/>
    <property type="match status" value="1"/>
</dbReference>
<dbReference type="FunFam" id="3.40.50.880:FF:000001">
    <property type="entry name" value="GMP synthase [glutamine-hydrolyzing]"/>
    <property type="match status" value="1"/>
</dbReference>
<dbReference type="Gene3D" id="3.30.300.10">
    <property type="match status" value="1"/>
</dbReference>
<dbReference type="Gene3D" id="3.40.50.880">
    <property type="match status" value="1"/>
</dbReference>
<dbReference type="Gene3D" id="3.40.50.620">
    <property type="entry name" value="HUPs"/>
    <property type="match status" value="1"/>
</dbReference>
<dbReference type="HAMAP" id="MF_00344">
    <property type="entry name" value="GMP_synthase"/>
    <property type="match status" value="1"/>
</dbReference>
<dbReference type="InterPro" id="IPR029062">
    <property type="entry name" value="Class_I_gatase-like"/>
</dbReference>
<dbReference type="InterPro" id="IPR017926">
    <property type="entry name" value="GATASE"/>
</dbReference>
<dbReference type="InterPro" id="IPR001674">
    <property type="entry name" value="GMP_synth_C"/>
</dbReference>
<dbReference type="InterPro" id="IPR004739">
    <property type="entry name" value="GMP_synth_GATase"/>
</dbReference>
<dbReference type="InterPro" id="IPR022955">
    <property type="entry name" value="GMP_synthase"/>
</dbReference>
<dbReference type="InterPro" id="IPR025777">
    <property type="entry name" value="GMPS_ATP_PPase_dom"/>
</dbReference>
<dbReference type="InterPro" id="IPR014729">
    <property type="entry name" value="Rossmann-like_a/b/a_fold"/>
</dbReference>
<dbReference type="NCBIfam" id="TIGR00884">
    <property type="entry name" value="guaA_Cterm"/>
    <property type="match status" value="1"/>
</dbReference>
<dbReference type="NCBIfam" id="TIGR00888">
    <property type="entry name" value="guaA_Nterm"/>
    <property type="match status" value="1"/>
</dbReference>
<dbReference type="NCBIfam" id="NF000848">
    <property type="entry name" value="PRK00074.1"/>
    <property type="match status" value="1"/>
</dbReference>
<dbReference type="PANTHER" id="PTHR11922:SF2">
    <property type="entry name" value="GMP SYNTHASE [GLUTAMINE-HYDROLYZING]"/>
    <property type="match status" value="1"/>
</dbReference>
<dbReference type="PANTHER" id="PTHR11922">
    <property type="entry name" value="GMP SYNTHASE-RELATED"/>
    <property type="match status" value="1"/>
</dbReference>
<dbReference type="Pfam" id="PF00117">
    <property type="entry name" value="GATase"/>
    <property type="match status" value="1"/>
</dbReference>
<dbReference type="Pfam" id="PF00958">
    <property type="entry name" value="GMP_synt_C"/>
    <property type="match status" value="1"/>
</dbReference>
<dbReference type="Pfam" id="PF03054">
    <property type="entry name" value="tRNA_Me_trans"/>
    <property type="match status" value="1"/>
</dbReference>
<dbReference type="PRINTS" id="PR00097">
    <property type="entry name" value="ANTSNTHASEII"/>
</dbReference>
<dbReference type="PRINTS" id="PR00099">
    <property type="entry name" value="CPSGATASE"/>
</dbReference>
<dbReference type="PRINTS" id="PR00096">
    <property type="entry name" value="GATASE"/>
</dbReference>
<dbReference type="SUPFAM" id="SSF52402">
    <property type="entry name" value="Adenine nucleotide alpha hydrolases-like"/>
    <property type="match status" value="1"/>
</dbReference>
<dbReference type="SUPFAM" id="SSF52317">
    <property type="entry name" value="Class I glutamine amidotransferase-like"/>
    <property type="match status" value="1"/>
</dbReference>
<dbReference type="SUPFAM" id="SSF54810">
    <property type="entry name" value="GMP synthetase C-terminal dimerisation domain"/>
    <property type="match status" value="1"/>
</dbReference>
<dbReference type="PROSITE" id="PS51273">
    <property type="entry name" value="GATASE_TYPE_1"/>
    <property type="match status" value="1"/>
</dbReference>
<dbReference type="PROSITE" id="PS51553">
    <property type="entry name" value="GMPS_ATP_PPASE"/>
    <property type="match status" value="1"/>
</dbReference>
<reference key="1">
    <citation type="journal article" date="2008" name="J. Bacteriol.">
        <title>Genome sequence of Staphylococcus aureus strain Newman and comparative analysis of staphylococcal genomes: polymorphism and evolution of two major pathogenicity islands.</title>
        <authorList>
            <person name="Baba T."/>
            <person name="Bae T."/>
            <person name="Schneewind O."/>
            <person name="Takeuchi F."/>
            <person name="Hiramatsu K."/>
        </authorList>
    </citation>
    <scope>NUCLEOTIDE SEQUENCE [LARGE SCALE GENOMIC DNA]</scope>
    <source>
        <strain>Newman</strain>
    </source>
</reference>
<feature type="chain" id="PRO_1000120424" description="GMP synthase [glutamine-hydrolyzing]">
    <location>
        <begin position="1"/>
        <end position="513"/>
    </location>
</feature>
<feature type="domain" description="Glutamine amidotransferase type-1" evidence="1">
    <location>
        <begin position="9"/>
        <end position="198"/>
    </location>
</feature>
<feature type="domain" description="GMPS ATP-PPase" evidence="1">
    <location>
        <begin position="199"/>
        <end position="388"/>
    </location>
</feature>
<feature type="active site" description="Nucleophile" evidence="1">
    <location>
        <position position="86"/>
    </location>
</feature>
<feature type="active site" evidence="1">
    <location>
        <position position="172"/>
    </location>
</feature>
<feature type="active site" evidence="1">
    <location>
        <position position="174"/>
    </location>
</feature>
<feature type="binding site" evidence="1">
    <location>
        <begin position="226"/>
        <end position="232"/>
    </location>
    <ligand>
        <name>ATP</name>
        <dbReference type="ChEBI" id="CHEBI:30616"/>
    </ligand>
</feature>
<organism>
    <name type="scientific">Staphylococcus aureus (strain Newman)</name>
    <dbReference type="NCBI Taxonomy" id="426430"/>
    <lineage>
        <taxon>Bacteria</taxon>
        <taxon>Bacillati</taxon>
        <taxon>Bacillota</taxon>
        <taxon>Bacilli</taxon>
        <taxon>Bacillales</taxon>
        <taxon>Staphylococcaceae</taxon>
        <taxon>Staphylococcus</taxon>
    </lineage>
</organism>
<evidence type="ECO:0000255" key="1">
    <source>
        <dbReference type="HAMAP-Rule" id="MF_00344"/>
    </source>
</evidence>
<keyword id="KW-0067">ATP-binding</keyword>
<keyword id="KW-0315">Glutamine amidotransferase</keyword>
<keyword id="KW-0332">GMP biosynthesis</keyword>
<keyword id="KW-0436">Ligase</keyword>
<keyword id="KW-0547">Nucleotide-binding</keyword>
<keyword id="KW-0658">Purine biosynthesis</keyword>
<sequence>MEMAKEQELILVLDFGSQYNQLITRRIREMGVYSELHDHEISIEEIKKMNPKGIILSGGPNSVYEEGSFTIDPEIYNLGIPVLGICYGMQLTTKLLGGKVERANEREYGKAIINAKSDELFAGLPAEQTVWMSHSDKVIEIPEGFEVIADSPSTDYAAIEDKKRRIYGVQFHPEVRHTEYGNDLLNNFVRRVCDCRGQWTMENFIEIEIEKIRQRVGDRRVLCAMSGGVDSSVVAVLLHKAIGDQLTCIFVDHGLLRKGEGDMVMEQFGEGFNMNIIRVNAKDRFMNKLKGVSDPEQKRKIIGNEFVYVFDDEASKLKGVDFLAQGTLYTDVIESGTKTAQTIKSHHNVGGLPEDMEFELIEPINTLFKDEVRKLGIELGIPEHLVWRQPFPGPGLGIRVLGEITEDKLEIVRESDAILRQVIREEGLEREIWQYFTVLPNIQSVGVMGDYRTYDHTVGIRAVTSIDGMTSDFARIDWEVLQKISSRIVNEVDHVNRVVYDITSKPPSTIEWE</sequence>
<proteinExistence type="inferred from homology"/>